<accession>A0AK51</accession>
<evidence type="ECO:0000255" key="1">
    <source>
        <dbReference type="HAMAP-Rule" id="MF_00238"/>
    </source>
</evidence>
<reference key="1">
    <citation type="journal article" date="2006" name="J. Bacteriol.">
        <title>Whole-genome sequence of Listeria welshimeri reveals common steps in genome reduction with Listeria innocua as compared to Listeria monocytogenes.</title>
        <authorList>
            <person name="Hain T."/>
            <person name="Steinweg C."/>
            <person name="Kuenne C.T."/>
            <person name="Billion A."/>
            <person name="Ghai R."/>
            <person name="Chatterjee S.S."/>
            <person name="Domann E."/>
            <person name="Kaerst U."/>
            <person name="Goesmann A."/>
            <person name="Bekel T."/>
            <person name="Bartels D."/>
            <person name="Kaiser O."/>
            <person name="Meyer F."/>
            <person name="Puehler A."/>
            <person name="Weisshaar B."/>
            <person name="Wehland J."/>
            <person name="Liang C."/>
            <person name="Dandekar T."/>
            <person name="Lampidis R."/>
            <person name="Kreft J."/>
            <person name="Goebel W."/>
            <person name="Chakraborty T."/>
        </authorList>
    </citation>
    <scope>NUCLEOTIDE SEQUENCE [LARGE SCALE GENOMIC DNA]</scope>
    <source>
        <strain>ATCC 35897 / DSM 20650 / CCUG 15529 / CIP 8149 / NCTC 11857 / SLCC 5334 / V8</strain>
    </source>
</reference>
<name>KCY_LISW6</name>
<organism>
    <name type="scientific">Listeria welshimeri serovar 6b (strain ATCC 35897 / DSM 20650 / CCUG 15529 / CIP 8149 / NCTC 11857 / SLCC 5334 / V8)</name>
    <dbReference type="NCBI Taxonomy" id="386043"/>
    <lineage>
        <taxon>Bacteria</taxon>
        <taxon>Bacillati</taxon>
        <taxon>Bacillota</taxon>
        <taxon>Bacilli</taxon>
        <taxon>Bacillales</taxon>
        <taxon>Listeriaceae</taxon>
        <taxon>Listeria</taxon>
    </lineage>
</organism>
<sequence>MTKKICIAIDGPAAAGKSTVAKIVAKKLRFVYIDTGAMYRAVTYIAQKNNLAYEDETAIAQLLQKTVIRFEPGEVQQVFINDENVTEVIRSLEVTNHVSIVAAHPAIREALQERQQIFATEGGIVMDGRDIGTAVLPNAELKIFLLASVEERAERRFKENVAKGFAGDLNQLKKEIEERDHLDYTREHSPLKKAEDAIEVDTTSMSIEEVANKILSLAEQKINN</sequence>
<dbReference type="EC" id="2.7.4.25" evidence="1"/>
<dbReference type="EMBL" id="AM263198">
    <property type="protein sequence ID" value="CAK21383.1"/>
    <property type="molecule type" value="Genomic_DNA"/>
</dbReference>
<dbReference type="RefSeq" id="WP_011702730.1">
    <property type="nucleotide sequence ID" value="NC_008555.1"/>
</dbReference>
<dbReference type="SMR" id="A0AK51"/>
<dbReference type="STRING" id="386043.lwe1965"/>
<dbReference type="GeneID" id="61189865"/>
<dbReference type="KEGG" id="lwe:lwe1965"/>
<dbReference type="eggNOG" id="COG0283">
    <property type="taxonomic scope" value="Bacteria"/>
</dbReference>
<dbReference type="HOGENOM" id="CLU_079959_0_2_9"/>
<dbReference type="OrthoDB" id="9807434at2"/>
<dbReference type="Proteomes" id="UP000000779">
    <property type="component" value="Chromosome"/>
</dbReference>
<dbReference type="GO" id="GO:0005829">
    <property type="term" value="C:cytosol"/>
    <property type="evidence" value="ECO:0007669"/>
    <property type="project" value="TreeGrafter"/>
</dbReference>
<dbReference type="GO" id="GO:0005524">
    <property type="term" value="F:ATP binding"/>
    <property type="evidence" value="ECO:0007669"/>
    <property type="project" value="UniProtKB-UniRule"/>
</dbReference>
<dbReference type="GO" id="GO:0036430">
    <property type="term" value="F:CMP kinase activity"/>
    <property type="evidence" value="ECO:0007669"/>
    <property type="project" value="RHEA"/>
</dbReference>
<dbReference type="GO" id="GO:0036431">
    <property type="term" value="F:dCMP kinase activity"/>
    <property type="evidence" value="ECO:0007669"/>
    <property type="project" value="RHEA"/>
</dbReference>
<dbReference type="GO" id="GO:0015949">
    <property type="term" value="P:nucleobase-containing small molecule interconversion"/>
    <property type="evidence" value="ECO:0007669"/>
    <property type="project" value="TreeGrafter"/>
</dbReference>
<dbReference type="GO" id="GO:0006220">
    <property type="term" value="P:pyrimidine nucleotide metabolic process"/>
    <property type="evidence" value="ECO:0007669"/>
    <property type="project" value="UniProtKB-UniRule"/>
</dbReference>
<dbReference type="CDD" id="cd02020">
    <property type="entry name" value="CMPK"/>
    <property type="match status" value="1"/>
</dbReference>
<dbReference type="FunFam" id="3.40.50.300:FF:000484">
    <property type="entry name" value="Cytidylate kinase"/>
    <property type="match status" value="1"/>
</dbReference>
<dbReference type="Gene3D" id="3.40.50.300">
    <property type="entry name" value="P-loop containing nucleotide triphosphate hydrolases"/>
    <property type="match status" value="1"/>
</dbReference>
<dbReference type="HAMAP" id="MF_00238">
    <property type="entry name" value="Cytidyl_kinase_type1"/>
    <property type="match status" value="1"/>
</dbReference>
<dbReference type="InterPro" id="IPR003136">
    <property type="entry name" value="Cytidylate_kin"/>
</dbReference>
<dbReference type="InterPro" id="IPR011994">
    <property type="entry name" value="Cytidylate_kinase_dom"/>
</dbReference>
<dbReference type="InterPro" id="IPR027417">
    <property type="entry name" value="P-loop_NTPase"/>
</dbReference>
<dbReference type="NCBIfam" id="TIGR00017">
    <property type="entry name" value="cmk"/>
    <property type="match status" value="1"/>
</dbReference>
<dbReference type="PANTHER" id="PTHR21299:SF2">
    <property type="entry name" value="CYTIDYLATE KINASE"/>
    <property type="match status" value="1"/>
</dbReference>
<dbReference type="PANTHER" id="PTHR21299">
    <property type="entry name" value="CYTIDYLATE KINASE/PANTOATE-BETA-ALANINE LIGASE"/>
    <property type="match status" value="1"/>
</dbReference>
<dbReference type="Pfam" id="PF02224">
    <property type="entry name" value="Cytidylate_kin"/>
    <property type="match status" value="1"/>
</dbReference>
<dbReference type="SUPFAM" id="SSF52540">
    <property type="entry name" value="P-loop containing nucleoside triphosphate hydrolases"/>
    <property type="match status" value="1"/>
</dbReference>
<protein>
    <recommendedName>
        <fullName evidence="1">Cytidylate kinase</fullName>
        <shortName evidence="1">CK</shortName>
        <ecNumber evidence="1">2.7.4.25</ecNumber>
    </recommendedName>
    <alternativeName>
        <fullName evidence="1">Cytidine monophosphate kinase</fullName>
        <shortName evidence="1">CMP kinase</shortName>
    </alternativeName>
</protein>
<gene>
    <name evidence="1" type="primary">cmk</name>
    <name type="ordered locus">lwe1965</name>
</gene>
<comment type="catalytic activity">
    <reaction evidence="1">
        <text>CMP + ATP = CDP + ADP</text>
        <dbReference type="Rhea" id="RHEA:11600"/>
        <dbReference type="ChEBI" id="CHEBI:30616"/>
        <dbReference type="ChEBI" id="CHEBI:58069"/>
        <dbReference type="ChEBI" id="CHEBI:60377"/>
        <dbReference type="ChEBI" id="CHEBI:456216"/>
        <dbReference type="EC" id="2.7.4.25"/>
    </reaction>
</comment>
<comment type="catalytic activity">
    <reaction evidence="1">
        <text>dCMP + ATP = dCDP + ADP</text>
        <dbReference type="Rhea" id="RHEA:25094"/>
        <dbReference type="ChEBI" id="CHEBI:30616"/>
        <dbReference type="ChEBI" id="CHEBI:57566"/>
        <dbReference type="ChEBI" id="CHEBI:58593"/>
        <dbReference type="ChEBI" id="CHEBI:456216"/>
        <dbReference type="EC" id="2.7.4.25"/>
    </reaction>
</comment>
<comment type="subcellular location">
    <subcellularLocation>
        <location evidence="1">Cytoplasm</location>
    </subcellularLocation>
</comment>
<comment type="similarity">
    <text evidence="1">Belongs to the cytidylate kinase family. Type 1 subfamily.</text>
</comment>
<keyword id="KW-0067">ATP-binding</keyword>
<keyword id="KW-0963">Cytoplasm</keyword>
<keyword id="KW-0418">Kinase</keyword>
<keyword id="KW-0547">Nucleotide-binding</keyword>
<keyword id="KW-0808">Transferase</keyword>
<proteinExistence type="inferred from homology"/>
<feature type="chain" id="PRO_1000048231" description="Cytidylate kinase">
    <location>
        <begin position="1"/>
        <end position="224"/>
    </location>
</feature>
<feature type="binding site" evidence="1">
    <location>
        <begin position="11"/>
        <end position="19"/>
    </location>
    <ligand>
        <name>ATP</name>
        <dbReference type="ChEBI" id="CHEBI:30616"/>
    </ligand>
</feature>